<feature type="chain" id="PRO_0000127900" description="Uncharacterized protein AF_0613">
    <location>
        <begin position="1"/>
        <end position="105"/>
    </location>
</feature>
<sequence length="105" mass="12068">MGTLTISISDDVEKRLRDVVKEKHGSSKGAMSKVIEEALKIYFSILEKKKKVFRAYRGEELVAEAHDLEELAKILREKNVDPRSVKIVSSEHIKPVARMGWKYVR</sequence>
<accession>O29642</accession>
<protein>
    <recommendedName>
        <fullName>Uncharacterized protein AF_0613</fullName>
    </recommendedName>
</protein>
<organism>
    <name type="scientific">Archaeoglobus fulgidus (strain ATCC 49558 / DSM 4304 / JCM 9628 / NBRC 100126 / VC-16)</name>
    <dbReference type="NCBI Taxonomy" id="224325"/>
    <lineage>
        <taxon>Archaea</taxon>
        <taxon>Methanobacteriati</taxon>
        <taxon>Methanobacteriota</taxon>
        <taxon>Archaeoglobi</taxon>
        <taxon>Archaeoglobales</taxon>
        <taxon>Archaeoglobaceae</taxon>
        <taxon>Archaeoglobus</taxon>
    </lineage>
</organism>
<keyword id="KW-1185">Reference proteome</keyword>
<gene>
    <name type="ordered locus">AF_0613</name>
</gene>
<name>Y613_ARCFU</name>
<proteinExistence type="predicted"/>
<dbReference type="EMBL" id="AE000782">
    <property type="protein sequence ID" value="AAB90630.1"/>
    <property type="molecule type" value="Genomic_DNA"/>
</dbReference>
<dbReference type="PIR" id="E69326">
    <property type="entry name" value="E69326"/>
</dbReference>
<dbReference type="RefSeq" id="WP_010878117.1">
    <property type="nucleotide sequence ID" value="NC_000917.1"/>
</dbReference>
<dbReference type="SMR" id="O29642"/>
<dbReference type="PaxDb" id="224325-AF_0613"/>
<dbReference type="EnsemblBacteria" id="AAB90630">
    <property type="protein sequence ID" value="AAB90630"/>
    <property type="gene ID" value="AF_0613"/>
</dbReference>
<dbReference type="KEGG" id="afu:AF_0613"/>
<dbReference type="eggNOG" id="arCOG03886">
    <property type="taxonomic scope" value="Archaea"/>
</dbReference>
<dbReference type="HOGENOM" id="CLU_175992_0_0_2"/>
<dbReference type="OrthoDB" id="91340at2157"/>
<dbReference type="Proteomes" id="UP000002199">
    <property type="component" value="Chromosome"/>
</dbReference>
<dbReference type="GO" id="GO:0006355">
    <property type="term" value="P:regulation of DNA-templated transcription"/>
    <property type="evidence" value="ECO:0007669"/>
    <property type="project" value="InterPro"/>
</dbReference>
<dbReference type="Gene3D" id="1.10.1220.10">
    <property type="entry name" value="Met repressor-like"/>
    <property type="match status" value="1"/>
</dbReference>
<dbReference type="InterPro" id="IPR013321">
    <property type="entry name" value="Arc_rbn_hlx_hlx"/>
</dbReference>
<reference key="1">
    <citation type="journal article" date="1997" name="Nature">
        <title>The complete genome sequence of the hyperthermophilic, sulphate-reducing archaeon Archaeoglobus fulgidus.</title>
        <authorList>
            <person name="Klenk H.-P."/>
            <person name="Clayton R.A."/>
            <person name="Tomb J.-F."/>
            <person name="White O."/>
            <person name="Nelson K.E."/>
            <person name="Ketchum K.A."/>
            <person name="Dodson R.J."/>
            <person name="Gwinn M.L."/>
            <person name="Hickey E.K."/>
            <person name="Peterson J.D."/>
            <person name="Richardson D.L."/>
            <person name="Kerlavage A.R."/>
            <person name="Graham D.E."/>
            <person name="Kyrpides N.C."/>
            <person name="Fleischmann R.D."/>
            <person name="Quackenbush J."/>
            <person name="Lee N.H."/>
            <person name="Sutton G.G."/>
            <person name="Gill S.R."/>
            <person name="Kirkness E.F."/>
            <person name="Dougherty B.A."/>
            <person name="McKenney K."/>
            <person name="Adams M.D."/>
            <person name="Loftus B.J."/>
            <person name="Peterson S.N."/>
            <person name="Reich C.I."/>
            <person name="McNeil L.K."/>
            <person name="Badger J.H."/>
            <person name="Glodek A."/>
            <person name="Zhou L."/>
            <person name="Overbeek R."/>
            <person name="Gocayne J.D."/>
            <person name="Weidman J.F."/>
            <person name="McDonald L.A."/>
            <person name="Utterback T.R."/>
            <person name="Cotton M.D."/>
            <person name="Spriggs T."/>
            <person name="Artiach P."/>
            <person name="Kaine B.P."/>
            <person name="Sykes S.M."/>
            <person name="Sadow P.W."/>
            <person name="D'Andrea K.P."/>
            <person name="Bowman C."/>
            <person name="Fujii C."/>
            <person name="Garland S.A."/>
            <person name="Mason T.M."/>
            <person name="Olsen G.J."/>
            <person name="Fraser C.M."/>
            <person name="Smith H.O."/>
            <person name="Woese C.R."/>
            <person name="Venter J.C."/>
        </authorList>
    </citation>
    <scope>NUCLEOTIDE SEQUENCE [LARGE SCALE GENOMIC DNA]</scope>
    <source>
        <strain>ATCC 49558 / DSM 4304 / JCM 9628 / NBRC 100126 / VC-16</strain>
    </source>
</reference>